<keyword id="KW-0175">Coiled coil</keyword>
<keyword id="KW-1185">Reference proteome</keyword>
<proteinExistence type="predicted"/>
<evidence type="ECO:0000255" key="1"/>
<evidence type="ECO:0000255" key="2">
    <source>
        <dbReference type="PROSITE-ProRule" id="PRU00129"/>
    </source>
</evidence>
<evidence type="ECO:0000305" key="3"/>
<name>MCC01_ARATH</name>
<comment type="sequence caution" evidence="3">
    <conflict type="erroneous gene model prediction">
        <sequence resource="EMBL-CDS" id="AAF24591"/>
    </conflict>
    <text>The predicted gene has been split into 2 genes: At1g31390 and At1g31400.</text>
</comment>
<comment type="sequence caution" evidence="3">
    <conflict type="erroneous gene model prediction">
        <sequence resource="EMBL-CDS" id="AAG51271"/>
    </conflict>
</comment>
<comment type="sequence caution" evidence="3">
    <conflict type="erroneous gene model prediction">
        <sequence resource="EMBL-CDS" id="AEE31350"/>
    </conflict>
</comment>
<organism>
    <name type="scientific">Arabidopsis thaliana</name>
    <name type="common">Mouse-ear cress</name>
    <dbReference type="NCBI Taxonomy" id="3702"/>
    <lineage>
        <taxon>Eukaryota</taxon>
        <taxon>Viridiplantae</taxon>
        <taxon>Streptophyta</taxon>
        <taxon>Embryophyta</taxon>
        <taxon>Tracheophyta</taxon>
        <taxon>Spermatophyta</taxon>
        <taxon>Magnoliopsida</taxon>
        <taxon>eudicotyledons</taxon>
        <taxon>Gunneridae</taxon>
        <taxon>Pentapetalae</taxon>
        <taxon>rosids</taxon>
        <taxon>malvids</taxon>
        <taxon>Brassicales</taxon>
        <taxon>Brassicaceae</taxon>
        <taxon>Camelineae</taxon>
        <taxon>Arabidopsis</taxon>
    </lineage>
</organism>
<sequence length="279" mass="32002">MEDQYEKKITWTIKNFSFVQSQAIDSDIFVVGDSKWHLVAYPKGNGESTNKCLSLYLNVADFQSLPNGWKRHIKYRLTVVNQMSEKLSEQEVIQGWFYKNFHISGFQTMLPLSKLLDKNGGFLVNGDVKIVVEVGVLEVVGKSDVLEETLLVHESIDINGFQVLPSQVESVNNLFEKHPDIVSEFRSKNPLMRTTYLNDLLCLTEILCESSEELSTGDMANAYSTLTCLKKAGFKLDWLEKKLKEVCEARVQEIDEEWKDLTDLKENWSSDDEDDLNRL</sequence>
<accession>Q9C870</accession>
<accession>Q9SHE2</accession>
<protein>
    <recommendedName>
        <fullName>MATH domain and coiled-coil domain-containing protein At1g31390</fullName>
    </recommendedName>
    <alternativeName>
        <fullName>RTM3-like protein At1g31390</fullName>
    </alternativeName>
</protein>
<feature type="chain" id="PRO_0000429278" description="MATH domain and coiled-coil domain-containing protein At1g31390">
    <location>
        <begin position="1"/>
        <end position="279"/>
    </location>
</feature>
<feature type="domain" description="MATH" evidence="2">
    <location>
        <begin position="6"/>
        <end position="134"/>
    </location>
</feature>
<feature type="coiled-coil region" evidence="1">
    <location>
        <begin position="235"/>
        <end position="271"/>
    </location>
</feature>
<reference key="1">
    <citation type="journal article" date="2000" name="Nature">
        <title>Sequence and analysis of chromosome 1 of the plant Arabidopsis thaliana.</title>
        <authorList>
            <person name="Theologis A."/>
            <person name="Ecker J.R."/>
            <person name="Palm C.J."/>
            <person name="Federspiel N.A."/>
            <person name="Kaul S."/>
            <person name="White O."/>
            <person name="Alonso J."/>
            <person name="Altafi H."/>
            <person name="Araujo R."/>
            <person name="Bowman C.L."/>
            <person name="Brooks S.Y."/>
            <person name="Buehler E."/>
            <person name="Chan A."/>
            <person name="Chao Q."/>
            <person name="Chen H."/>
            <person name="Cheuk R.F."/>
            <person name="Chin C.W."/>
            <person name="Chung M.K."/>
            <person name="Conn L."/>
            <person name="Conway A.B."/>
            <person name="Conway A.R."/>
            <person name="Creasy T.H."/>
            <person name="Dewar K."/>
            <person name="Dunn P."/>
            <person name="Etgu P."/>
            <person name="Feldblyum T.V."/>
            <person name="Feng J.-D."/>
            <person name="Fong B."/>
            <person name="Fujii C.Y."/>
            <person name="Gill J.E."/>
            <person name="Goldsmith A.D."/>
            <person name="Haas B."/>
            <person name="Hansen N.F."/>
            <person name="Hughes B."/>
            <person name="Huizar L."/>
            <person name="Hunter J.L."/>
            <person name="Jenkins J."/>
            <person name="Johnson-Hopson C."/>
            <person name="Khan S."/>
            <person name="Khaykin E."/>
            <person name="Kim C.J."/>
            <person name="Koo H.L."/>
            <person name="Kremenetskaia I."/>
            <person name="Kurtz D.B."/>
            <person name="Kwan A."/>
            <person name="Lam B."/>
            <person name="Langin-Hooper S."/>
            <person name="Lee A."/>
            <person name="Lee J.M."/>
            <person name="Lenz C.A."/>
            <person name="Li J.H."/>
            <person name="Li Y.-P."/>
            <person name="Lin X."/>
            <person name="Liu S.X."/>
            <person name="Liu Z.A."/>
            <person name="Luros J.S."/>
            <person name="Maiti R."/>
            <person name="Marziali A."/>
            <person name="Militscher J."/>
            <person name="Miranda M."/>
            <person name="Nguyen M."/>
            <person name="Nierman W.C."/>
            <person name="Osborne B.I."/>
            <person name="Pai G."/>
            <person name="Peterson J."/>
            <person name="Pham P.K."/>
            <person name="Rizzo M."/>
            <person name="Rooney T."/>
            <person name="Rowley D."/>
            <person name="Sakano H."/>
            <person name="Salzberg S.L."/>
            <person name="Schwartz J.R."/>
            <person name="Shinn P."/>
            <person name="Southwick A.M."/>
            <person name="Sun H."/>
            <person name="Tallon L.J."/>
            <person name="Tambunga G."/>
            <person name="Toriumi M.J."/>
            <person name="Town C.D."/>
            <person name="Utterback T."/>
            <person name="Van Aken S."/>
            <person name="Vaysberg M."/>
            <person name="Vysotskaia V.S."/>
            <person name="Walker M."/>
            <person name="Wu D."/>
            <person name="Yu G."/>
            <person name="Fraser C.M."/>
            <person name="Venter J.C."/>
            <person name="Davis R.W."/>
        </authorList>
    </citation>
    <scope>NUCLEOTIDE SEQUENCE [LARGE SCALE GENOMIC DNA]</scope>
    <source>
        <strain>cv. Columbia</strain>
    </source>
</reference>
<reference key="2">
    <citation type="journal article" date="2017" name="Plant J.">
        <title>Araport11: a complete reannotation of the Arabidopsis thaliana reference genome.</title>
        <authorList>
            <person name="Cheng C.Y."/>
            <person name="Krishnakumar V."/>
            <person name="Chan A.P."/>
            <person name="Thibaud-Nissen F."/>
            <person name="Schobel S."/>
            <person name="Town C.D."/>
        </authorList>
    </citation>
    <scope>GENOME REANNOTATION</scope>
    <source>
        <strain>cv. Columbia</strain>
    </source>
</reference>
<reference key="3">
    <citation type="journal article" date="2010" name="Plant Physiol.">
        <title>RTM3, which controls long-distance movement of potyviruses, is a member of a new plant gene family encoding a meprin and TRAF homology domain-containing protein.</title>
        <authorList>
            <person name="Cosson P."/>
            <person name="Sofer L."/>
            <person name="Le Q.H."/>
            <person name="Leger V."/>
            <person name="Schurdi-Levraud V."/>
            <person name="Whitham S.A."/>
            <person name="Yamamoto M.L."/>
            <person name="Gopalan S."/>
            <person name="Le Gall O."/>
            <person name="Candresse T."/>
            <person name="Carrington J.C."/>
            <person name="Revers F."/>
        </authorList>
    </citation>
    <scope>GENE FAMILY</scope>
</reference>
<dbReference type="EMBL" id="AC007654">
    <property type="protein sequence ID" value="AAF24591.1"/>
    <property type="status" value="ALT_SEQ"/>
    <property type="molecule type" value="Genomic_DNA"/>
</dbReference>
<dbReference type="EMBL" id="AC027135">
    <property type="protein sequence ID" value="AAG51271.1"/>
    <property type="status" value="ALT_SEQ"/>
    <property type="molecule type" value="Genomic_DNA"/>
</dbReference>
<dbReference type="EMBL" id="CP002684">
    <property type="protein sequence ID" value="AEE31350.1"/>
    <property type="status" value="ALT_SEQ"/>
    <property type="molecule type" value="Genomic_DNA"/>
</dbReference>
<dbReference type="PIR" id="G86439">
    <property type="entry name" value="G86439"/>
</dbReference>
<dbReference type="RefSeq" id="NP_174424.1">
    <property type="nucleotide sequence ID" value="NM_102878.2"/>
</dbReference>
<dbReference type="SMR" id="Q9C870"/>
<dbReference type="FunCoup" id="Q9C870">
    <property type="interactions" value="47"/>
</dbReference>
<dbReference type="PaxDb" id="3702-AT1G31390.1"/>
<dbReference type="GeneID" id="840029"/>
<dbReference type="KEGG" id="ath:AT1G31390"/>
<dbReference type="Araport" id="AT1G31390"/>
<dbReference type="TAIR" id="AT1G31390"/>
<dbReference type="eggNOG" id="KOG1987">
    <property type="taxonomic scope" value="Eukaryota"/>
</dbReference>
<dbReference type="HOGENOM" id="CLU_026537_0_0_1"/>
<dbReference type="InParanoid" id="Q9C870"/>
<dbReference type="PRO" id="PR:Q9C870"/>
<dbReference type="Proteomes" id="UP000006548">
    <property type="component" value="Chromosome 1"/>
</dbReference>
<dbReference type="ExpressionAtlas" id="Q9C870">
    <property type="expression patterns" value="baseline and differential"/>
</dbReference>
<dbReference type="CDD" id="cd00121">
    <property type="entry name" value="MATH"/>
    <property type="match status" value="1"/>
</dbReference>
<dbReference type="Gene3D" id="2.60.210.10">
    <property type="entry name" value="Apoptosis, Tumor Necrosis Factor Receptor Associated Protein 2, Chain A"/>
    <property type="match status" value="1"/>
</dbReference>
<dbReference type="InterPro" id="IPR050804">
    <property type="entry name" value="MATH-CC_domain_protein"/>
</dbReference>
<dbReference type="InterPro" id="IPR002083">
    <property type="entry name" value="MATH/TRAF_dom"/>
</dbReference>
<dbReference type="InterPro" id="IPR008974">
    <property type="entry name" value="TRAF-like"/>
</dbReference>
<dbReference type="PANTHER" id="PTHR46236:SF21">
    <property type="entry name" value="TRAF-LIKE FAMILY PROTEIN-RELATED"/>
    <property type="match status" value="1"/>
</dbReference>
<dbReference type="PANTHER" id="PTHR46236">
    <property type="entry name" value="TRAF-LIKE SUPERFAMILY PROTEIN"/>
    <property type="match status" value="1"/>
</dbReference>
<dbReference type="Pfam" id="PF22486">
    <property type="entry name" value="MATH_2"/>
    <property type="match status" value="1"/>
</dbReference>
<dbReference type="SMART" id="SM00061">
    <property type="entry name" value="MATH"/>
    <property type="match status" value="1"/>
</dbReference>
<dbReference type="SUPFAM" id="SSF49599">
    <property type="entry name" value="TRAF domain-like"/>
    <property type="match status" value="1"/>
</dbReference>
<dbReference type="PROSITE" id="PS50144">
    <property type="entry name" value="MATH"/>
    <property type="match status" value="1"/>
</dbReference>
<gene>
    <name type="ordered locus">At1g31390</name>
    <name type="ORF">T19E23.18</name>
    <name type="ORF">T8E3.4</name>
</gene>